<keyword id="KW-0050">Antiport</keyword>
<keyword id="KW-0997">Cell inner membrane</keyword>
<keyword id="KW-1003">Cell membrane</keyword>
<keyword id="KW-0406">Ion transport</keyword>
<keyword id="KW-0472">Membrane</keyword>
<keyword id="KW-0630">Potassium</keyword>
<keyword id="KW-0633">Potassium transport</keyword>
<keyword id="KW-0812">Transmembrane</keyword>
<keyword id="KW-1133">Transmembrane helix</keyword>
<keyword id="KW-0813">Transport</keyword>
<sequence length="575" mass="61458">MDAVTINSFFLVAALLVGASVLLSALSSRLGIPILVIFLAVGMLAGEDGPGGIHFADYSVAYLVGNLALAIILLDGGMRTRVSSFRVALWPALSLATVGVAITTGLTGLAAAWLFDLNLMQGMLIGAIVGSTDAAAVFSLLGGRSLNERVSATLEIESGSNDPMAVFLTVTLIEILATNQQGLDWFFLLLQLGKQFGLGAGIGLGGGWLLWKLINSARLAPGLYPLLTVSGGLLIFALTTAIGGSGILAIYLTGLLLGNLSLRSRSTTLSVLDGLTWLSQIGMFLVLGLLASPHKLLPIALPALALAAWMILFARPVSVWIGLLPFKNFAPRERWFISWVGLRGAVPIILAVFPMMAGLPNAQLYFNVAFFVVLVSLILQGSSLPLASKLARVEVPAPPSPINRSGLEIDLDSQWETFVYRLSAEKWCIGSPLRDLRMPKGTRICALFRDQELLHPSGSTCLQSNDILCVIGHERDLPALGQLFSQAPEQDLGPRFFGDFLLEAAANMVDLAPLYGLDVSEVADQTLGDFLADQLGDNLVVGDQVEWQGLIWTVAEMEEGKPRKIGVRFQEEDPV</sequence>
<protein>
    <recommendedName>
        <fullName evidence="1">K(+)/H(+) antiporter NhaP2</fullName>
    </recommendedName>
    <alternativeName>
        <fullName evidence="1">Potassium/proton antiporter NhaP2</fullName>
    </alternativeName>
</protein>
<organism>
    <name type="scientific">Aeromonas salmonicida (strain A449)</name>
    <dbReference type="NCBI Taxonomy" id="382245"/>
    <lineage>
        <taxon>Bacteria</taxon>
        <taxon>Pseudomonadati</taxon>
        <taxon>Pseudomonadota</taxon>
        <taxon>Gammaproteobacteria</taxon>
        <taxon>Aeromonadales</taxon>
        <taxon>Aeromonadaceae</taxon>
        <taxon>Aeromonas</taxon>
    </lineage>
</organism>
<name>NHAP2_AERS4</name>
<evidence type="ECO:0000255" key="1">
    <source>
        <dbReference type="HAMAP-Rule" id="MF_01075"/>
    </source>
</evidence>
<reference key="1">
    <citation type="journal article" date="2008" name="BMC Genomics">
        <title>The genome of Aeromonas salmonicida subsp. salmonicida A449: insights into the evolution of a fish pathogen.</title>
        <authorList>
            <person name="Reith M.E."/>
            <person name="Singh R.K."/>
            <person name="Curtis B."/>
            <person name="Boyd J.M."/>
            <person name="Bouevitch A."/>
            <person name="Kimball J."/>
            <person name="Munholland J."/>
            <person name="Murphy C."/>
            <person name="Sarty D."/>
            <person name="Williams J."/>
            <person name="Nash J.H."/>
            <person name="Johnson S.C."/>
            <person name="Brown L.L."/>
        </authorList>
    </citation>
    <scope>NUCLEOTIDE SEQUENCE [LARGE SCALE GENOMIC DNA]</scope>
    <source>
        <strain>A449</strain>
    </source>
</reference>
<accession>A4SPT0</accession>
<comment type="function">
    <text evidence="1">K(+)/H(+) antiporter that extrudes potassium in exchange for external protons and maintains the internal concentration of potassium under toxic levels.</text>
</comment>
<comment type="catalytic activity">
    <reaction evidence="1">
        <text>K(+)(in) + H(+)(out) = K(+)(out) + H(+)(in)</text>
        <dbReference type="Rhea" id="RHEA:29467"/>
        <dbReference type="ChEBI" id="CHEBI:15378"/>
        <dbReference type="ChEBI" id="CHEBI:29103"/>
    </reaction>
    <physiologicalReaction direction="left-to-right" evidence="1">
        <dbReference type="Rhea" id="RHEA:29468"/>
    </physiologicalReaction>
</comment>
<comment type="subcellular location">
    <subcellularLocation>
        <location evidence="1">Cell inner membrane</location>
        <topology evidence="1">Multi-pass membrane protein</topology>
    </subcellularLocation>
</comment>
<comment type="similarity">
    <text evidence="1">Belongs to the monovalent cation:proton antiporter 1 (CPA1) transporter (TC 2.A.36) family. NhaP2 subfamily.</text>
</comment>
<proteinExistence type="inferred from homology"/>
<feature type="chain" id="PRO_1000064662" description="K(+)/H(+) antiporter NhaP2">
    <location>
        <begin position="1"/>
        <end position="575"/>
    </location>
</feature>
<feature type="transmembrane region" description="Helical" evidence="1">
    <location>
        <begin position="3"/>
        <end position="23"/>
    </location>
</feature>
<feature type="transmembrane region" description="Helical" evidence="1">
    <location>
        <begin position="30"/>
        <end position="50"/>
    </location>
</feature>
<feature type="transmembrane region" description="Helical" evidence="1">
    <location>
        <begin position="53"/>
        <end position="73"/>
    </location>
</feature>
<feature type="transmembrane region" description="Helical" evidence="1">
    <location>
        <begin position="95"/>
        <end position="115"/>
    </location>
</feature>
<feature type="transmembrane region" description="Helical" evidence="1">
    <location>
        <begin position="122"/>
        <end position="142"/>
    </location>
</feature>
<feature type="transmembrane region" description="Helical" evidence="1">
    <location>
        <begin position="185"/>
        <end position="205"/>
    </location>
</feature>
<feature type="transmembrane region" description="Helical" evidence="1">
    <location>
        <begin position="232"/>
        <end position="252"/>
    </location>
</feature>
<feature type="transmembrane region" description="Helical" evidence="1">
    <location>
        <begin position="271"/>
        <end position="291"/>
    </location>
</feature>
<feature type="transmembrane region" description="Helical" evidence="1">
    <location>
        <begin position="304"/>
        <end position="324"/>
    </location>
</feature>
<feature type="transmembrane region" description="Helical" evidence="1">
    <location>
        <begin position="335"/>
        <end position="355"/>
    </location>
</feature>
<feature type="transmembrane region" description="Helical" evidence="1">
    <location>
        <begin position="364"/>
        <end position="384"/>
    </location>
</feature>
<feature type="domain" description="RCK C-terminal" evidence="1">
    <location>
        <begin position="404"/>
        <end position="486"/>
    </location>
</feature>
<gene>
    <name evidence="1" type="primary">nhaP2</name>
    <name type="synonym">cvrA</name>
    <name type="ordered locus">ASA_2890</name>
</gene>
<dbReference type="EMBL" id="CP000644">
    <property type="protein sequence ID" value="ABO90902.1"/>
    <property type="molecule type" value="Genomic_DNA"/>
</dbReference>
<dbReference type="RefSeq" id="WP_005312960.1">
    <property type="nucleotide sequence ID" value="NC_009348.1"/>
</dbReference>
<dbReference type="SMR" id="A4SPT0"/>
<dbReference type="STRING" id="29491.GCA_000820065_00829"/>
<dbReference type="KEGG" id="asa:ASA_2890"/>
<dbReference type="eggNOG" id="COG3263">
    <property type="taxonomic scope" value="Bacteria"/>
</dbReference>
<dbReference type="HOGENOM" id="CLU_005912_9_2_6"/>
<dbReference type="Proteomes" id="UP000000225">
    <property type="component" value="Chromosome"/>
</dbReference>
<dbReference type="GO" id="GO:0005886">
    <property type="term" value="C:plasma membrane"/>
    <property type="evidence" value="ECO:0007669"/>
    <property type="project" value="UniProtKB-SubCell"/>
</dbReference>
<dbReference type="GO" id="GO:0050660">
    <property type="term" value="F:flavin adenine dinucleotide binding"/>
    <property type="evidence" value="ECO:0007669"/>
    <property type="project" value="InterPro"/>
</dbReference>
<dbReference type="GO" id="GO:0015386">
    <property type="term" value="F:potassium:proton antiporter activity"/>
    <property type="evidence" value="ECO:0007669"/>
    <property type="project" value="UniProtKB-UniRule"/>
</dbReference>
<dbReference type="GO" id="GO:0006884">
    <property type="term" value="P:cell volume homeostasis"/>
    <property type="evidence" value="ECO:0007669"/>
    <property type="project" value="InterPro"/>
</dbReference>
<dbReference type="Gene3D" id="1.20.1530.20">
    <property type="match status" value="1"/>
</dbReference>
<dbReference type="Gene3D" id="3.30.465.10">
    <property type="match status" value="1"/>
</dbReference>
<dbReference type="Gene3D" id="3.30.70.1450">
    <property type="entry name" value="Regulator of K+ conductance, C-terminal domain"/>
    <property type="match status" value="1"/>
</dbReference>
<dbReference type="HAMAP" id="MF_01075">
    <property type="entry name" value="NhaP2"/>
    <property type="match status" value="1"/>
</dbReference>
<dbReference type="InterPro" id="IPR006153">
    <property type="entry name" value="Cation/H_exchanger_TM"/>
</dbReference>
<dbReference type="InterPro" id="IPR036318">
    <property type="entry name" value="FAD-bd_PCMH-like_sf"/>
</dbReference>
<dbReference type="InterPro" id="IPR016169">
    <property type="entry name" value="FAD-bd_PCMH_sub2"/>
</dbReference>
<dbReference type="InterPro" id="IPR038770">
    <property type="entry name" value="Na+/solute_symporter_sf"/>
</dbReference>
<dbReference type="InterPro" id="IPR023729">
    <property type="entry name" value="NhaP2"/>
</dbReference>
<dbReference type="InterPro" id="IPR006037">
    <property type="entry name" value="RCK_C"/>
</dbReference>
<dbReference type="InterPro" id="IPR036721">
    <property type="entry name" value="RCK_C_sf"/>
</dbReference>
<dbReference type="InterPro" id="IPR005170">
    <property type="entry name" value="Transptr-assoc_dom"/>
</dbReference>
<dbReference type="NCBIfam" id="NF003714">
    <property type="entry name" value="PRK05326.1-1"/>
    <property type="match status" value="1"/>
</dbReference>
<dbReference type="NCBIfam" id="NF003715">
    <property type="entry name" value="PRK05326.1-2"/>
    <property type="match status" value="1"/>
</dbReference>
<dbReference type="NCBIfam" id="NF003716">
    <property type="entry name" value="PRK05326.1-3"/>
    <property type="match status" value="1"/>
</dbReference>
<dbReference type="PANTHER" id="PTHR32507:SF7">
    <property type="entry name" value="K(+)_H(+) ANTIPORTER NHAP2"/>
    <property type="match status" value="1"/>
</dbReference>
<dbReference type="PANTHER" id="PTHR32507">
    <property type="entry name" value="NA(+)/H(+) ANTIPORTER 1"/>
    <property type="match status" value="1"/>
</dbReference>
<dbReference type="Pfam" id="PF03471">
    <property type="entry name" value="CorC_HlyC"/>
    <property type="match status" value="1"/>
</dbReference>
<dbReference type="Pfam" id="PF00999">
    <property type="entry name" value="Na_H_Exchanger"/>
    <property type="match status" value="1"/>
</dbReference>
<dbReference type="Pfam" id="PF02080">
    <property type="entry name" value="TrkA_C"/>
    <property type="match status" value="1"/>
</dbReference>
<dbReference type="SMART" id="SM01091">
    <property type="entry name" value="CorC_HlyC"/>
    <property type="match status" value="1"/>
</dbReference>
<dbReference type="SUPFAM" id="SSF56176">
    <property type="entry name" value="FAD-binding/transporter-associated domain-like"/>
    <property type="match status" value="1"/>
</dbReference>
<dbReference type="SUPFAM" id="SSF116726">
    <property type="entry name" value="TrkA C-terminal domain-like"/>
    <property type="match status" value="1"/>
</dbReference>
<dbReference type="PROSITE" id="PS51202">
    <property type="entry name" value="RCK_C"/>
    <property type="match status" value="1"/>
</dbReference>